<evidence type="ECO:0000255" key="1">
    <source>
        <dbReference type="HAMAP-Rule" id="MF_00961"/>
    </source>
</evidence>
<keyword id="KW-0963">Cytoplasm</keyword>
<keyword id="KW-0238">DNA-binding</keyword>
<keyword id="KW-1185">Reference proteome</keyword>
<keyword id="KW-0731">Sigma factor</keyword>
<keyword id="KW-0346">Stress response</keyword>
<keyword id="KW-0804">Transcription</keyword>
<keyword id="KW-0805">Transcription regulation</keyword>
<sequence length="287" mass="33557">MIKVETKTLPAISLGNLDSYIREANSWPMLSSQEEKYLSEKLFYHGDLNAAKTLILSHLRFVIHVSRNYSGYGLLQADLIQEGNIGLMKAVRRFNPKIGVRLVSFAVHWIKSEIHEYVLRNWRIVKVATTKSQRKLFFNLRKTKQRLGWFNDHELELVAQELGVKREDVREMESRMSAQDIALHHVPDNFREEQNFSYTIPYLKDSLSDFANHVEEDNWEAHKTNKLSNALSSLDERSRNIIHARWLDDSDHKMTLREIAHNYGISAERVRQLEKNAMKKLKVAIET</sequence>
<comment type="function">
    <text evidence="1">Sigma factors are initiation factors that promote the attachment of RNA polymerase to specific initiation sites and are then released. This sigma factor is involved in regulation of expression of heat shock genes.</text>
</comment>
<comment type="subunit">
    <text evidence="1">Interacts with the RNA polymerase core enzyme.</text>
</comment>
<comment type="subcellular location">
    <subcellularLocation>
        <location evidence="1">Cytoplasm</location>
    </subcellularLocation>
</comment>
<comment type="similarity">
    <text evidence="1">Belongs to the sigma-70 factor family. RpoH subfamily.</text>
</comment>
<feature type="chain" id="PRO_0000093953" description="RNA polymerase sigma factor RpoH">
    <location>
        <begin position="1"/>
        <end position="287"/>
    </location>
</feature>
<feature type="DNA-binding region" description="H-T-H motif" evidence="1">
    <location>
        <begin position="256"/>
        <end position="275"/>
    </location>
</feature>
<feature type="region of interest" description="Sigma-70 factor domain-2" evidence="1">
    <location>
        <begin position="54"/>
        <end position="123"/>
    </location>
</feature>
<feature type="region of interest" description="Sigma-70 factor domain-4" evidence="1">
    <location>
        <begin position="230"/>
        <end position="283"/>
    </location>
</feature>
<feature type="short sequence motif" description="Interaction with polymerase core subunit RpoC">
    <location>
        <begin position="78"/>
        <end position="81"/>
    </location>
</feature>
<reference key="1">
    <citation type="journal article" date="2003" name="Proc. Natl. Acad. Sci. U.S.A.">
        <title>Reductive genome evolution in Buchnera aphidicola.</title>
        <authorList>
            <person name="van Ham R.C.H.J."/>
            <person name="Kamerbeek J."/>
            <person name="Palacios C."/>
            <person name="Rausell C."/>
            <person name="Abascal F."/>
            <person name="Bastolla U."/>
            <person name="Fernandez J.M."/>
            <person name="Jimenez L."/>
            <person name="Postigo M."/>
            <person name="Silva F.J."/>
            <person name="Tamames J."/>
            <person name="Viguera E."/>
            <person name="Latorre A."/>
            <person name="Valencia A."/>
            <person name="Moran F."/>
            <person name="Moya A."/>
        </authorList>
    </citation>
    <scope>NUCLEOTIDE SEQUENCE [LARGE SCALE GENOMIC DNA]</scope>
    <source>
        <strain>Bp</strain>
    </source>
</reference>
<proteinExistence type="inferred from homology"/>
<dbReference type="EMBL" id="AE016826">
    <property type="protein sequence ID" value="AAO26770.1"/>
    <property type="molecule type" value="Genomic_DNA"/>
</dbReference>
<dbReference type="RefSeq" id="WP_011091171.1">
    <property type="nucleotide sequence ID" value="NC_004545.1"/>
</dbReference>
<dbReference type="SMR" id="Q89B27"/>
<dbReference type="STRING" id="224915.bbp_027"/>
<dbReference type="KEGG" id="bab:bbp_027"/>
<dbReference type="eggNOG" id="COG0568">
    <property type="taxonomic scope" value="Bacteria"/>
</dbReference>
<dbReference type="HOGENOM" id="CLU_014793_3_5_6"/>
<dbReference type="OrthoDB" id="9809557at2"/>
<dbReference type="Proteomes" id="UP000000601">
    <property type="component" value="Chromosome"/>
</dbReference>
<dbReference type="GO" id="GO:0005737">
    <property type="term" value="C:cytoplasm"/>
    <property type="evidence" value="ECO:0007669"/>
    <property type="project" value="UniProtKB-SubCell"/>
</dbReference>
<dbReference type="GO" id="GO:0003677">
    <property type="term" value="F:DNA binding"/>
    <property type="evidence" value="ECO:0007669"/>
    <property type="project" value="UniProtKB-UniRule"/>
</dbReference>
<dbReference type="GO" id="GO:0016987">
    <property type="term" value="F:sigma factor activity"/>
    <property type="evidence" value="ECO:0007669"/>
    <property type="project" value="UniProtKB-UniRule"/>
</dbReference>
<dbReference type="GO" id="GO:0006352">
    <property type="term" value="P:DNA-templated transcription initiation"/>
    <property type="evidence" value="ECO:0007669"/>
    <property type="project" value="UniProtKB-UniRule"/>
</dbReference>
<dbReference type="GO" id="GO:0009408">
    <property type="term" value="P:response to heat"/>
    <property type="evidence" value="ECO:0007669"/>
    <property type="project" value="UniProtKB-UniRule"/>
</dbReference>
<dbReference type="CDD" id="cd06171">
    <property type="entry name" value="Sigma70_r4"/>
    <property type="match status" value="1"/>
</dbReference>
<dbReference type="FunFam" id="1.10.10.10:FF:000285">
    <property type="entry name" value="RNA polymerase sigma factor RpoH"/>
    <property type="match status" value="1"/>
</dbReference>
<dbReference type="FunFam" id="1.20.120.1810:FF:000001">
    <property type="entry name" value="RNA polymerase sigma factor RpoH"/>
    <property type="match status" value="1"/>
</dbReference>
<dbReference type="Gene3D" id="1.20.120.1810">
    <property type="match status" value="1"/>
</dbReference>
<dbReference type="Gene3D" id="1.20.140.160">
    <property type="match status" value="1"/>
</dbReference>
<dbReference type="HAMAP" id="MF_00961">
    <property type="entry name" value="Sigma70_RpoH"/>
    <property type="match status" value="1"/>
</dbReference>
<dbReference type="InterPro" id="IPR014284">
    <property type="entry name" value="RNA_pol_sigma-70_dom"/>
</dbReference>
<dbReference type="InterPro" id="IPR000943">
    <property type="entry name" value="RNA_pol_sigma70"/>
</dbReference>
<dbReference type="InterPro" id="IPR007627">
    <property type="entry name" value="RNA_pol_sigma70_r2"/>
</dbReference>
<dbReference type="InterPro" id="IPR007630">
    <property type="entry name" value="RNA_pol_sigma70_r4"/>
</dbReference>
<dbReference type="InterPro" id="IPR013325">
    <property type="entry name" value="RNA_pol_sigma_r2"/>
</dbReference>
<dbReference type="InterPro" id="IPR013324">
    <property type="entry name" value="RNA_pol_sigma_r3/r4-like"/>
</dbReference>
<dbReference type="InterPro" id="IPR012759">
    <property type="entry name" value="RNA_pol_sigma_RpoH_proteobac"/>
</dbReference>
<dbReference type="InterPro" id="IPR050813">
    <property type="entry name" value="Sigma-70_Factor"/>
</dbReference>
<dbReference type="NCBIfam" id="NF005143">
    <property type="entry name" value="PRK06596.1"/>
    <property type="match status" value="1"/>
</dbReference>
<dbReference type="NCBIfam" id="TIGR02392">
    <property type="entry name" value="rpoH_proteo"/>
    <property type="match status" value="1"/>
</dbReference>
<dbReference type="NCBIfam" id="TIGR02937">
    <property type="entry name" value="sigma70-ECF"/>
    <property type="match status" value="1"/>
</dbReference>
<dbReference type="PANTHER" id="PTHR30376:SF3">
    <property type="entry name" value="RNA POLYMERASE SIGMA FACTOR RPOH"/>
    <property type="match status" value="1"/>
</dbReference>
<dbReference type="PANTHER" id="PTHR30376">
    <property type="entry name" value="SIGMA FACTOR RPOH HEAT SHOCK RELATED"/>
    <property type="match status" value="1"/>
</dbReference>
<dbReference type="Pfam" id="PF04542">
    <property type="entry name" value="Sigma70_r2"/>
    <property type="match status" value="1"/>
</dbReference>
<dbReference type="Pfam" id="PF04545">
    <property type="entry name" value="Sigma70_r4"/>
    <property type="match status" value="1"/>
</dbReference>
<dbReference type="PRINTS" id="PR00046">
    <property type="entry name" value="SIGMA70FCT"/>
</dbReference>
<dbReference type="SUPFAM" id="SSF88946">
    <property type="entry name" value="Sigma2 domain of RNA polymerase sigma factors"/>
    <property type="match status" value="1"/>
</dbReference>
<dbReference type="SUPFAM" id="SSF88659">
    <property type="entry name" value="Sigma3 and sigma4 domains of RNA polymerase sigma factors"/>
    <property type="match status" value="1"/>
</dbReference>
<dbReference type="PROSITE" id="PS00715">
    <property type="entry name" value="SIGMA70_1"/>
    <property type="match status" value="1"/>
</dbReference>
<dbReference type="PROSITE" id="PS00716">
    <property type="entry name" value="SIGMA70_2"/>
    <property type="match status" value="1"/>
</dbReference>
<organism>
    <name type="scientific">Buchnera aphidicola subsp. Baizongia pistaciae (strain Bp)</name>
    <dbReference type="NCBI Taxonomy" id="224915"/>
    <lineage>
        <taxon>Bacteria</taxon>
        <taxon>Pseudomonadati</taxon>
        <taxon>Pseudomonadota</taxon>
        <taxon>Gammaproteobacteria</taxon>
        <taxon>Enterobacterales</taxon>
        <taxon>Erwiniaceae</taxon>
        <taxon>Buchnera</taxon>
    </lineage>
</organism>
<accession>Q89B27</accession>
<protein>
    <recommendedName>
        <fullName evidence="1">RNA polymerase sigma factor RpoH</fullName>
    </recommendedName>
    <alternativeName>
        <fullName evidence="1">RNA polymerase sigma-32 factor</fullName>
    </alternativeName>
</protein>
<gene>
    <name evidence="1" type="primary">rpoH</name>
    <name type="ordered locus">bbp_027</name>
</gene>
<name>RPOH_BUCBP</name>